<reference key="1">
    <citation type="journal article" date="2006" name="Nature">
        <title>DNA sequence and analysis of human chromosome 8.</title>
        <authorList>
            <person name="Nusbaum C."/>
            <person name="Mikkelsen T.S."/>
            <person name="Zody M.C."/>
            <person name="Asakawa S."/>
            <person name="Taudien S."/>
            <person name="Garber M."/>
            <person name="Kodira C.D."/>
            <person name="Schueler M.G."/>
            <person name="Shimizu A."/>
            <person name="Whittaker C.A."/>
            <person name="Chang J.L."/>
            <person name="Cuomo C.A."/>
            <person name="Dewar K."/>
            <person name="FitzGerald M.G."/>
            <person name="Yang X."/>
            <person name="Allen N.R."/>
            <person name="Anderson S."/>
            <person name="Asakawa T."/>
            <person name="Blechschmidt K."/>
            <person name="Bloom T."/>
            <person name="Borowsky M.L."/>
            <person name="Butler J."/>
            <person name="Cook A."/>
            <person name="Corum B."/>
            <person name="DeArellano K."/>
            <person name="DeCaprio D."/>
            <person name="Dooley K.T."/>
            <person name="Dorris L. III"/>
            <person name="Engels R."/>
            <person name="Gloeckner G."/>
            <person name="Hafez N."/>
            <person name="Hagopian D.S."/>
            <person name="Hall J.L."/>
            <person name="Ishikawa S.K."/>
            <person name="Jaffe D.B."/>
            <person name="Kamat A."/>
            <person name="Kudoh J."/>
            <person name="Lehmann R."/>
            <person name="Lokitsang T."/>
            <person name="Macdonald P."/>
            <person name="Major J.E."/>
            <person name="Matthews C.D."/>
            <person name="Mauceli E."/>
            <person name="Menzel U."/>
            <person name="Mihalev A.H."/>
            <person name="Minoshima S."/>
            <person name="Murayama Y."/>
            <person name="Naylor J.W."/>
            <person name="Nicol R."/>
            <person name="Nguyen C."/>
            <person name="O'Leary S.B."/>
            <person name="O'Neill K."/>
            <person name="Parker S.C.J."/>
            <person name="Polley A."/>
            <person name="Raymond C.K."/>
            <person name="Reichwald K."/>
            <person name="Rodriguez J."/>
            <person name="Sasaki T."/>
            <person name="Schilhabel M."/>
            <person name="Siddiqui R."/>
            <person name="Smith C.L."/>
            <person name="Sneddon T.P."/>
            <person name="Talamas J.A."/>
            <person name="Tenzin P."/>
            <person name="Topham K."/>
            <person name="Venkataraman V."/>
            <person name="Wen G."/>
            <person name="Yamazaki S."/>
            <person name="Young S.K."/>
            <person name="Zeng Q."/>
            <person name="Zimmer A.R."/>
            <person name="Rosenthal A."/>
            <person name="Birren B.W."/>
            <person name="Platzer M."/>
            <person name="Shimizu N."/>
            <person name="Lander E.S."/>
        </authorList>
    </citation>
    <scope>NUCLEOTIDE SEQUENCE [LARGE SCALE GENOMIC DNA]</scope>
</reference>
<reference key="2">
    <citation type="journal article" date="2007" name="Hum. Mol. Genet.">
        <title>Characterization and evolution of the novel gene family FAM90A in primates originated by multiple duplication and rearrangement events.</title>
        <authorList>
            <person name="Bosch N."/>
            <person name="Caceres M."/>
            <person name="Cardone M.F."/>
            <person name="Carreras A."/>
            <person name="Ballana E."/>
            <person name="Rocchi M."/>
            <person name="Armengol L."/>
            <person name="Estivill X."/>
        </authorList>
    </citation>
    <scope>CHARACTERIZATION</scope>
</reference>
<evidence type="ECO:0000250" key="1">
    <source>
        <dbReference type="UniProtKB" id="A6NIJ5"/>
    </source>
</evidence>
<evidence type="ECO:0000256" key="2">
    <source>
        <dbReference type="SAM" id="MobiDB-lite"/>
    </source>
</evidence>
<evidence type="ECO:0000305" key="3"/>
<evidence type="ECO:0000312" key="4">
    <source>
        <dbReference type="HGNC" id="HGNC:32253"/>
    </source>
</evidence>
<dbReference type="EMBL" id="AF228730">
    <property type="status" value="NOT_ANNOTATED_CDS"/>
    <property type="molecule type" value="Genomic_DNA"/>
</dbReference>
<dbReference type="RefSeq" id="NP_001410458.1">
    <property type="nucleotide sequence ID" value="NM_001423529.1"/>
</dbReference>
<dbReference type="FunCoup" id="A8MXJ8">
    <property type="interactions" value="12"/>
</dbReference>
<dbReference type="IntAct" id="A8MXJ8">
    <property type="interactions" value="1"/>
</dbReference>
<dbReference type="iPTMnet" id="A8MXJ8"/>
<dbReference type="PhosphoSitePlus" id="A8MXJ8"/>
<dbReference type="BioMuta" id="HGNC:32253"/>
<dbReference type="MassIVE" id="A8MXJ8"/>
<dbReference type="Ensembl" id="ENST00000528738.1">
    <property type="protein sequence ID" value="ENSP00000514264.1"/>
    <property type="gene ID" value="ENSG00000215373.4"/>
</dbReference>
<dbReference type="GeneID" id="441315"/>
<dbReference type="MANE-Select" id="ENST00000528738.1">
    <property type="protein sequence ID" value="ENSP00000514264.1"/>
    <property type="RefSeq nucleotide sequence ID" value="NM_001423529.1"/>
    <property type="RefSeq protein sequence ID" value="NP_001410458.1"/>
</dbReference>
<dbReference type="AGR" id="HGNC:32253"/>
<dbReference type="GeneCards" id="FAM90A5"/>
<dbReference type="HGNC" id="HGNC:32253">
    <property type="gene designation" value="FAM90A5"/>
</dbReference>
<dbReference type="HPA" id="ENSG00000215373">
    <property type="expression patterns" value="Not detected"/>
</dbReference>
<dbReference type="MIM" id="613043">
    <property type="type" value="gene"/>
</dbReference>
<dbReference type="neXtProt" id="NX_A8MXJ8"/>
<dbReference type="PharmGKB" id="PA142671800"/>
<dbReference type="eggNOG" id="ENOG502RU1C">
    <property type="taxonomic scope" value="Eukaryota"/>
</dbReference>
<dbReference type="GeneTree" id="ENSGT00910000144208"/>
<dbReference type="InParanoid" id="A8MXJ8"/>
<dbReference type="PAN-GO" id="A8MXJ8">
    <property type="GO annotations" value="0 GO annotations based on evolutionary models"/>
</dbReference>
<dbReference type="PhylomeDB" id="A8MXJ8"/>
<dbReference type="PathwayCommons" id="A8MXJ8"/>
<dbReference type="Pharos" id="A8MXJ8">
    <property type="development level" value="Tdark"/>
</dbReference>
<dbReference type="PRO" id="PR:A8MXJ8"/>
<dbReference type="Proteomes" id="UP000005640">
    <property type="component" value="Chromosome 8"/>
</dbReference>
<dbReference type="RNAct" id="A8MXJ8">
    <property type="molecule type" value="protein"/>
</dbReference>
<dbReference type="InterPro" id="IPR039213">
    <property type="entry name" value="FAM90"/>
</dbReference>
<dbReference type="InterPro" id="IPR041670">
    <property type="entry name" value="Znf-CCHC_6"/>
</dbReference>
<dbReference type="PANTHER" id="PTHR16035:SF14">
    <property type="entry name" value="FAMILY WITH SEQUENCE SIMILARITY 90 MEMBER A11, PSEUDOGENE-RELATED"/>
    <property type="match status" value="1"/>
</dbReference>
<dbReference type="PANTHER" id="PTHR16035">
    <property type="entry name" value="PROTEIN FAM90A1"/>
    <property type="match status" value="1"/>
</dbReference>
<dbReference type="Pfam" id="PF15288">
    <property type="entry name" value="zf-CCHC_6"/>
    <property type="match status" value="1"/>
</dbReference>
<organism>
    <name type="scientific">Homo sapiens</name>
    <name type="common">Human</name>
    <dbReference type="NCBI Taxonomy" id="9606"/>
    <lineage>
        <taxon>Eukaryota</taxon>
        <taxon>Metazoa</taxon>
        <taxon>Chordata</taxon>
        <taxon>Craniata</taxon>
        <taxon>Vertebrata</taxon>
        <taxon>Euteleostomi</taxon>
        <taxon>Mammalia</taxon>
        <taxon>Eutheria</taxon>
        <taxon>Euarchontoglires</taxon>
        <taxon>Primates</taxon>
        <taxon>Haplorrhini</taxon>
        <taxon>Catarrhini</taxon>
        <taxon>Hominidae</taxon>
        <taxon>Homo</taxon>
    </lineage>
</organism>
<proteinExistence type="evidence at protein level"/>
<gene>
    <name evidence="4" type="primary">FAM90A5</name>
    <name evidence="4" type="synonym">FAM90A5P</name>
</gene>
<name>F90A5_HUMAN</name>
<keyword id="KW-1185">Reference proteome</keyword>
<comment type="miscellaneous">
    <text evidence="1">Primate-specific FAM90A gene family, thought to have arisen during multiple duplication and rearrangement events.</text>
</comment>
<comment type="similarity">
    <text evidence="3">Belongs to the FAM90 family.</text>
</comment>
<accession>A8MXJ8</accession>
<feature type="chain" id="PRO_0000338606" description="Protein FAM90A5">
    <location>
        <begin position="1"/>
        <end position="464"/>
    </location>
</feature>
<feature type="region of interest" description="Disordered" evidence="2">
    <location>
        <begin position="16"/>
        <end position="42"/>
    </location>
</feature>
<feature type="region of interest" description="Disordered" evidence="2">
    <location>
        <begin position="70"/>
        <end position="389"/>
    </location>
</feature>
<feature type="region of interest" description="Disordered" evidence="2">
    <location>
        <begin position="415"/>
        <end position="437"/>
    </location>
</feature>
<feature type="compositionally biased region" description="Basic and acidic residues" evidence="2">
    <location>
        <begin position="74"/>
        <end position="89"/>
    </location>
</feature>
<feature type="compositionally biased region" description="Basic and acidic residues" evidence="2">
    <location>
        <begin position="97"/>
        <end position="114"/>
    </location>
</feature>
<feature type="compositionally biased region" description="Low complexity" evidence="2">
    <location>
        <begin position="180"/>
        <end position="197"/>
    </location>
</feature>
<protein>
    <recommendedName>
        <fullName>Protein FAM90A5</fullName>
    </recommendedName>
</protein>
<sequence>MMARRDPTSWAKRLVRAQTLQKQRRAPVGPRAPPPDEEDPRLKCKNCGAFGHTARSTRCPMKCWKAALVPATLGKKEGKENLKPWKPRVEANPGPLNKDKGEKEERPRQQDPQRKALLHMFSGKPPEKPLPNGKGSTEPSDYLRVASGPMPVHTTSKRPRVDPVLADGSATEMSDRGSVLASLSPLRKASLSSSSSLGPKERQTGAAADMPQPAVRHQGREPLLVVKPTHSRPEGGCREVPQAASKTHGLLQAARPQAQDKRPAVTSQPCPPAATHSLGLGSNLSFGPGAKRPAQAPIQACLNFPKKPRLGPFQIPESAIQGGELGAPENLQPPPAATELGPSTSPQMGRRTPAQVPSVDRQPPHSRPCLPTAQACTMSHHPAASHDGAQPLRVLFRRLENGRWSSSLLAAPSFHSPEKPGAFLAQSPHVSEKSEAPCVRVPPSVLYEDLQVSSSSEDSDSDLE</sequence>